<gene>
    <name evidence="1" type="primary">grpE</name>
    <name type="ordered locus">Cj0758</name>
</gene>
<reference key="1">
    <citation type="journal article" date="1999" name="Infect. Immun.">
        <title>Cloning and expression of the dnaK gene of Campylobacter jejuni and antigenicity of heat shock protein 70.</title>
        <authorList>
            <person name="Thies F."/>
            <person name="Karch H."/>
            <person name="Hartung H.P."/>
            <person name="Giegerich G."/>
        </authorList>
    </citation>
    <scope>NUCLEOTIDE SEQUENCE [GENOMIC DNA]</scope>
</reference>
<reference key="2">
    <citation type="journal article" date="2000" name="Nature">
        <title>The genome sequence of the food-borne pathogen Campylobacter jejuni reveals hypervariable sequences.</title>
        <authorList>
            <person name="Parkhill J."/>
            <person name="Wren B.W."/>
            <person name="Mungall K.L."/>
            <person name="Ketley J.M."/>
            <person name="Churcher C.M."/>
            <person name="Basham D."/>
            <person name="Chillingworth T."/>
            <person name="Davies R.M."/>
            <person name="Feltwell T."/>
            <person name="Holroyd S."/>
            <person name="Jagels K."/>
            <person name="Karlyshev A.V."/>
            <person name="Moule S."/>
            <person name="Pallen M.J."/>
            <person name="Penn C.W."/>
            <person name="Quail M.A."/>
            <person name="Rajandream M.A."/>
            <person name="Rutherford K.M."/>
            <person name="van Vliet A.H.M."/>
            <person name="Whitehead S."/>
            <person name="Barrell B.G."/>
        </authorList>
    </citation>
    <scope>NUCLEOTIDE SEQUENCE [LARGE SCALE GENOMIC DNA]</scope>
    <source>
        <strain>ATCC 700819 / NCTC 11168</strain>
    </source>
</reference>
<accession>O69297</accession>
<accession>Q0PAD2</accession>
<accession>Q9PPG1</accession>
<name>GRPE_CAMJE</name>
<organism>
    <name type="scientific">Campylobacter jejuni subsp. jejuni serotype O:2 (strain ATCC 700819 / NCTC 11168)</name>
    <dbReference type="NCBI Taxonomy" id="192222"/>
    <lineage>
        <taxon>Bacteria</taxon>
        <taxon>Pseudomonadati</taxon>
        <taxon>Campylobacterota</taxon>
        <taxon>Epsilonproteobacteria</taxon>
        <taxon>Campylobacterales</taxon>
        <taxon>Campylobacteraceae</taxon>
        <taxon>Campylobacter</taxon>
    </lineage>
</organism>
<keyword id="KW-0143">Chaperone</keyword>
<keyword id="KW-0963">Cytoplasm</keyword>
<keyword id="KW-1185">Reference proteome</keyword>
<keyword id="KW-0346">Stress response</keyword>
<feature type="chain" id="PRO_0000113763" description="Protein GrpE">
    <location>
        <begin position="1"/>
        <end position="176"/>
    </location>
</feature>
<feature type="region of interest" description="Disordered" evidence="2">
    <location>
        <begin position="1"/>
        <end position="28"/>
    </location>
</feature>
<feature type="sequence conflict" description="In Ref. 1; CAA76669." evidence="3" ref="1">
    <original>E</original>
    <variation>D</variation>
    <location>
        <position position="3"/>
    </location>
</feature>
<feature type="sequence conflict" description="In Ref. 1; CAA76669." evidence="3" ref="1">
    <original>N</original>
    <variation>T</variation>
    <location>
        <position position="10"/>
    </location>
</feature>
<comment type="function">
    <text evidence="1">Participates actively in the response to hyperosmotic and heat shock by preventing the aggregation of stress-denatured proteins, in association with DnaK and GrpE. It is the nucleotide exchange factor for DnaK and may function as a thermosensor. Unfolded proteins bind initially to DnaJ; upon interaction with the DnaJ-bound protein, DnaK hydrolyzes its bound ATP, resulting in the formation of a stable complex. GrpE releases ADP from DnaK; ATP binding to DnaK triggers the release of the substrate protein, thus completing the reaction cycle. Several rounds of ATP-dependent interactions between DnaJ, DnaK and GrpE are required for fully efficient folding.</text>
</comment>
<comment type="subunit">
    <text evidence="1">Homodimer.</text>
</comment>
<comment type="subcellular location">
    <subcellularLocation>
        <location evidence="1">Cytoplasm</location>
    </subcellularLocation>
</comment>
<comment type="similarity">
    <text evidence="1">Belongs to the GrpE family.</text>
</comment>
<dbReference type="EMBL" id="Y17165">
    <property type="protein sequence ID" value="CAA76669.1"/>
    <property type="molecule type" value="Genomic_DNA"/>
</dbReference>
<dbReference type="EMBL" id="AL111168">
    <property type="protein sequence ID" value="CAL34886.1"/>
    <property type="molecule type" value="Genomic_DNA"/>
</dbReference>
<dbReference type="PIR" id="F81346">
    <property type="entry name" value="F81346"/>
</dbReference>
<dbReference type="RefSeq" id="WP_002780052.1">
    <property type="nucleotide sequence ID" value="NZ_SZUC01000001.1"/>
</dbReference>
<dbReference type="RefSeq" id="YP_002344165.1">
    <property type="nucleotide sequence ID" value="NC_002163.1"/>
</dbReference>
<dbReference type="SMR" id="O69297"/>
<dbReference type="IntAct" id="O69297">
    <property type="interactions" value="67"/>
</dbReference>
<dbReference type="STRING" id="192222.Cj0758"/>
<dbReference type="PaxDb" id="192222-Cj0758"/>
<dbReference type="EnsemblBacteria" id="CAL34886">
    <property type="protein sequence ID" value="CAL34886"/>
    <property type="gene ID" value="Cj0758"/>
</dbReference>
<dbReference type="GeneID" id="905068"/>
<dbReference type="KEGG" id="cje:Cj0758"/>
<dbReference type="PATRIC" id="fig|192222.6.peg.746"/>
<dbReference type="eggNOG" id="COG0576">
    <property type="taxonomic scope" value="Bacteria"/>
</dbReference>
<dbReference type="HOGENOM" id="CLU_057217_6_3_7"/>
<dbReference type="OrthoDB" id="9789811at2"/>
<dbReference type="Proteomes" id="UP000000799">
    <property type="component" value="Chromosome"/>
</dbReference>
<dbReference type="GO" id="GO:0005829">
    <property type="term" value="C:cytosol"/>
    <property type="evidence" value="ECO:0007669"/>
    <property type="project" value="TreeGrafter"/>
</dbReference>
<dbReference type="GO" id="GO:0000774">
    <property type="term" value="F:adenyl-nucleotide exchange factor activity"/>
    <property type="evidence" value="ECO:0007669"/>
    <property type="project" value="InterPro"/>
</dbReference>
<dbReference type="GO" id="GO:0042803">
    <property type="term" value="F:protein homodimerization activity"/>
    <property type="evidence" value="ECO:0007669"/>
    <property type="project" value="InterPro"/>
</dbReference>
<dbReference type="GO" id="GO:0051087">
    <property type="term" value="F:protein-folding chaperone binding"/>
    <property type="evidence" value="ECO:0007669"/>
    <property type="project" value="InterPro"/>
</dbReference>
<dbReference type="GO" id="GO:0051082">
    <property type="term" value="F:unfolded protein binding"/>
    <property type="evidence" value="ECO:0007669"/>
    <property type="project" value="TreeGrafter"/>
</dbReference>
<dbReference type="GO" id="GO:0006457">
    <property type="term" value="P:protein folding"/>
    <property type="evidence" value="ECO:0007669"/>
    <property type="project" value="InterPro"/>
</dbReference>
<dbReference type="CDD" id="cd00446">
    <property type="entry name" value="GrpE"/>
    <property type="match status" value="1"/>
</dbReference>
<dbReference type="FunFam" id="2.30.22.10:FF:000001">
    <property type="entry name" value="Protein GrpE"/>
    <property type="match status" value="1"/>
</dbReference>
<dbReference type="Gene3D" id="3.90.20.20">
    <property type="match status" value="1"/>
</dbReference>
<dbReference type="Gene3D" id="2.30.22.10">
    <property type="entry name" value="Head domain of nucleotide exchange factor GrpE"/>
    <property type="match status" value="1"/>
</dbReference>
<dbReference type="HAMAP" id="MF_01151">
    <property type="entry name" value="GrpE"/>
    <property type="match status" value="1"/>
</dbReference>
<dbReference type="InterPro" id="IPR000740">
    <property type="entry name" value="GrpE"/>
</dbReference>
<dbReference type="InterPro" id="IPR013805">
    <property type="entry name" value="GrpE_coiled_coil"/>
</dbReference>
<dbReference type="InterPro" id="IPR009012">
    <property type="entry name" value="GrpE_head"/>
</dbReference>
<dbReference type="NCBIfam" id="NF010738">
    <property type="entry name" value="PRK14140.1"/>
    <property type="match status" value="1"/>
</dbReference>
<dbReference type="NCBIfam" id="NF010756">
    <property type="entry name" value="PRK14159.1"/>
    <property type="match status" value="1"/>
</dbReference>
<dbReference type="PANTHER" id="PTHR21237">
    <property type="entry name" value="GRPE PROTEIN"/>
    <property type="match status" value="1"/>
</dbReference>
<dbReference type="PANTHER" id="PTHR21237:SF23">
    <property type="entry name" value="GRPE PROTEIN HOMOLOG, MITOCHONDRIAL"/>
    <property type="match status" value="1"/>
</dbReference>
<dbReference type="Pfam" id="PF01025">
    <property type="entry name" value="GrpE"/>
    <property type="match status" value="1"/>
</dbReference>
<dbReference type="PRINTS" id="PR00773">
    <property type="entry name" value="GRPEPROTEIN"/>
</dbReference>
<dbReference type="SUPFAM" id="SSF58014">
    <property type="entry name" value="Coiled-coil domain of nucleotide exchange factor GrpE"/>
    <property type="match status" value="1"/>
</dbReference>
<dbReference type="SUPFAM" id="SSF51064">
    <property type="entry name" value="Head domain of nucleotide exchange factor GrpE"/>
    <property type="match status" value="1"/>
</dbReference>
<dbReference type="PROSITE" id="PS01071">
    <property type="entry name" value="GRPE"/>
    <property type="match status" value="1"/>
</dbReference>
<sequence length="176" mass="20368">MSEQKQEFENENAENSEHLQDENLQNIEDVEQNKLQKDYDELKDKYMRANAEFENIKKRMEKEKLSAMAYANESFAKDLLDVLDALEAAVNVECQDEISLKIKEGVQNTLDLFLKKLEKHGVALIKDEKEFDPNLHEAMFHVDSENHQSGEVVQVLQKGYKIADRVIRPTKVSVAK</sequence>
<proteinExistence type="inferred from homology"/>
<protein>
    <recommendedName>
        <fullName evidence="1">Protein GrpE</fullName>
    </recommendedName>
    <alternativeName>
        <fullName evidence="1">HSP-70 cofactor</fullName>
    </alternativeName>
</protein>
<evidence type="ECO:0000255" key="1">
    <source>
        <dbReference type="HAMAP-Rule" id="MF_01151"/>
    </source>
</evidence>
<evidence type="ECO:0000256" key="2">
    <source>
        <dbReference type="SAM" id="MobiDB-lite"/>
    </source>
</evidence>
<evidence type="ECO:0000305" key="3"/>